<name>T2A1_THAGE</name>
<reference key="1">
    <citation type="patent" date="1999-04-26" number="EP0959131">
        <title>Method for cloning and producing AgeI restriction endonuclease in E.coli.</title>
        <authorList>
            <person name="Xu S.-Y."/>
            <person name="Maunus R.E."/>
            <person name="Lunnen K.D."/>
            <person name="Allen R."/>
        </authorList>
    </citation>
    <scope>NUCLEOTIDE SEQUENCE [GENOMIC DNA]</scope>
    <source>
        <strain>ATCC 25655 / DSM 5887 / JCM 20688 / IAM 12617 / NBRC 15761 / NCIMB 2206 / B6</strain>
    </source>
</reference>
<reference key="2">
    <citation type="submission" date="2002-08" db="EMBL/GenBank/DDBJ databases">
        <authorList>
            <person name="Xu S.-Y."/>
            <person name="Maunus R.E."/>
            <person name="Lunnen K.D."/>
            <person name="Allen R."/>
        </authorList>
    </citation>
    <scope>SEQUENCE REVISION TO N-TERMINUS</scope>
</reference>
<reference key="3">
    <citation type="submission" date="2009-03" db="EMBL/GenBank/DDBJ databases">
        <authorList>
            <person name="Xu S.-Y."/>
            <person name="Maunus R.E."/>
            <person name="Lunnen K.D."/>
            <person name="Allen R."/>
        </authorList>
    </citation>
    <scope>SEQUENCE REVISION TO 245 AND C-TERMINUS</scope>
</reference>
<reference key="4">
    <citation type="journal article" date="2003" name="Nucleic Acids Res.">
        <title>A nomenclature for restriction enzymes, DNA methyltransferases, homing endonucleases and their genes.</title>
        <authorList>
            <person name="Roberts R.J."/>
            <person name="Belfort M."/>
            <person name="Bestor T."/>
            <person name="Bhagwat A.S."/>
            <person name="Bickle T.A."/>
            <person name="Bitinaite J."/>
            <person name="Blumenthal R.M."/>
            <person name="Degtyarev S.K."/>
            <person name="Dryden D.T."/>
            <person name="Dybvig K."/>
            <person name="Firman K."/>
            <person name="Gromova E.S."/>
            <person name="Gumport R.I."/>
            <person name="Halford S.E."/>
            <person name="Hattman S."/>
            <person name="Heitman J."/>
            <person name="Hornby D.P."/>
            <person name="Janulaitis A."/>
            <person name="Jeltsch A."/>
            <person name="Josephsen J."/>
            <person name="Kiss A."/>
            <person name="Klaenhammer T.R."/>
            <person name="Kobayashi I."/>
            <person name="Kong H."/>
            <person name="Krueger D.H."/>
            <person name="Lacks S."/>
            <person name="Marinus M.G."/>
            <person name="Miyahara M."/>
            <person name="Morgan R.D."/>
            <person name="Murray N.E."/>
            <person name="Nagaraja V."/>
            <person name="Piekarowicz A."/>
            <person name="Pingoud A."/>
            <person name="Raleigh E."/>
            <person name="Rao D.N."/>
            <person name="Reich N."/>
            <person name="Repin V.E."/>
            <person name="Selker E.U."/>
            <person name="Shaw P.C."/>
            <person name="Stein D.C."/>
            <person name="Stoddard B.L."/>
            <person name="Szybalski W."/>
            <person name="Trautner T.A."/>
            <person name="Van Etten J.L."/>
            <person name="Vitor J.M."/>
            <person name="Wilson G.G."/>
            <person name="Xu S.Y."/>
        </authorList>
    </citation>
    <scope>NOMENCLATURE</scope>
    <scope>SUBTYPE</scope>
</reference>
<evidence type="ECO:0000303" key="1">
    <source>
    </source>
</evidence>
<evidence type="ECO:0000305" key="2"/>
<evidence type="ECO:0007829" key="3">
    <source>
        <dbReference type="PDB" id="5DWA"/>
    </source>
</evidence>
<evidence type="ECO:0007829" key="4">
    <source>
        <dbReference type="PDB" id="5DWB"/>
    </source>
</evidence>
<sequence length="278" mass="30539">MRLDLDFGRGLVAHVMLDNVSEEQYQQISDYFVPLVNKPKLKSRDAIGQAFVMATEVCPDANPSDLWHHVLYRIYIREKIGTDPSQSWVRTSGEAFEVALVERYNPVLARHGIRLTALFKGQKGLALTRMGVADRVGSRKVDVMIEKQGGGRSPDAEGFGVVGGIHAKVSLAERVSDDIPASRIMMGEGLLSVLSTLDVKSFPPPHGDLVNRGELGTPDRPSDKRNYIEGHGDFSACFSYNLRTSPSNATTPSGRHIYVSGFSGQDDEFTDYLVAQLA</sequence>
<organism>
    <name type="scientific">Thalassovita gelatinovora</name>
    <name type="common">Thalassobius gelatinovorus</name>
    <dbReference type="NCBI Taxonomy" id="53501"/>
    <lineage>
        <taxon>Bacteria</taxon>
        <taxon>Pseudomonadati</taxon>
        <taxon>Pseudomonadota</taxon>
        <taxon>Alphaproteobacteria</taxon>
        <taxon>Rhodobacterales</taxon>
        <taxon>Roseobacteraceae</taxon>
        <taxon>Thalassovita</taxon>
    </lineage>
</organism>
<feature type="chain" id="PRO_0000077278" description="Type II restriction enzyme AgeI">
    <location>
        <begin position="1"/>
        <end position="278"/>
    </location>
</feature>
<feature type="strand" evidence="3">
    <location>
        <begin position="2"/>
        <end position="8"/>
    </location>
</feature>
<feature type="strand" evidence="3">
    <location>
        <begin position="11"/>
        <end position="16"/>
    </location>
</feature>
<feature type="helix" evidence="3">
    <location>
        <begin position="22"/>
        <end position="36"/>
    </location>
</feature>
<feature type="helix" evidence="3">
    <location>
        <begin position="43"/>
        <end position="57"/>
    </location>
</feature>
<feature type="helix" evidence="3">
    <location>
        <begin position="63"/>
        <end position="69"/>
    </location>
</feature>
<feature type="helix" evidence="3">
    <location>
        <begin position="71"/>
        <end position="78"/>
    </location>
</feature>
<feature type="helix" evidence="3">
    <location>
        <begin position="84"/>
        <end position="109"/>
    </location>
</feature>
<feature type="turn" evidence="3">
    <location>
        <begin position="110"/>
        <end position="112"/>
    </location>
</feature>
<feature type="strand" evidence="3">
    <location>
        <begin position="113"/>
        <end position="117"/>
    </location>
</feature>
<feature type="turn" evidence="3">
    <location>
        <begin position="120"/>
        <end position="122"/>
    </location>
</feature>
<feature type="helix" evidence="3">
    <location>
        <begin position="123"/>
        <end position="130"/>
    </location>
</feature>
<feature type="turn" evidence="4">
    <location>
        <begin position="133"/>
        <end position="135"/>
    </location>
</feature>
<feature type="turn" evidence="3">
    <location>
        <begin position="136"/>
        <end position="139"/>
    </location>
</feature>
<feature type="strand" evidence="3">
    <location>
        <begin position="143"/>
        <end position="148"/>
    </location>
</feature>
<feature type="strand" evidence="3">
    <location>
        <begin position="151"/>
        <end position="153"/>
    </location>
</feature>
<feature type="strand" evidence="3">
    <location>
        <begin position="158"/>
        <end position="169"/>
    </location>
</feature>
<feature type="helix" evidence="3">
    <location>
        <begin position="174"/>
        <end position="177"/>
    </location>
</feature>
<feature type="helix" evidence="3">
    <location>
        <begin position="178"/>
        <end position="187"/>
    </location>
</feature>
<feature type="strand" evidence="3">
    <location>
        <begin position="191"/>
        <end position="196"/>
    </location>
</feature>
<feature type="turn" evidence="4">
    <location>
        <begin position="204"/>
        <end position="206"/>
    </location>
</feature>
<feature type="strand" evidence="3">
    <location>
        <begin position="218"/>
        <end position="221"/>
    </location>
</feature>
<feature type="helix" evidence="3">
    <location>
        <begin position="223"/>
        <end position="229"/>
    </location>
</feature>
<feature type="strand" evidence="3">
    <location>
        <begin position="234"/>
        <end position="239"/>
    </location>
</feature>
<feature type="strand" evidence="3">
    <location>
        <begin position="252"/>
        <end position="254"/>
    </location>
</feature>
<feature type="strand" evidence="3">
    <location>
        <begin position="257"/>
        <end position="259"/>
    </location>
</feature>
<feature type="strand" evidence="3">
    <location>
        <begin position="262"/>
        <end position="266"/>
    </location>
</feature>
<feature type="helix" evidence="3">
    <location>
        <begin position="268"/>
        <end position="277"/>
    </location>
</feature>
<accession>Q9KHV6</accession>
<proteinExistence type="evidence at protein level"/>
<gene>
    <name type="primary">ageIR</name>
</gene>
<dbReference type="EC" id="3.1.21.4"/>
<dbReference type="EMBL" id="AF247972">
    <property type="protein sequence ID" value="AAF71526.3"/>
    <property type="molecule type" value="Genomic_DNA"/>
</dbReference>
<dbReference type="RefSeq" id="WP_058263487.1">
    <property type="nucleotide sequence ID" value="NZ_CP051181.1"/>
</dbReference>
<dbReference type="PDB" id="5DWA">
    <property type="method" value="X-ray"/>
    <property type="resolution" value="1.50 A"/>
    <property type="chains" value="A/B=1-278"/>
</dbReference>
<dbReference type="PDB" id="5DWB">
    <property type="method" value="X-ray"/>
    <property type="resolution" value="2.40 A"/>
    <property type="chains" value="A/B=1-278"/>
</dbReference>
<dbReference type="PDB" id="5DWC">
    <property type="method" value="X-ray"/>
    <property type="resolution" value="2.50 A"/>
    <property type="chains" value="A=1-278"/>
</dbReference>
<dbReference type="PDBsum" id="5DWA"/>
<dbReference type="PDBsum" id="5DWB"/>
<dbReference type="PDBsum" id="5DWC"/>
<dbReference type="SASBDB" id="Q9KHV6"/>
<dbReference type="SMR" id="Q9KHV6"/>
<dbReference type="REBASE" id="42">
    <property type="entry name" value="AgeI"/>
</dbReference>
<dbReference type="BRENDA" id="3.1.21.4">
    <property type="organism ID" value="201"/>
</dbReference>
<dbReference type="PRO" id="PR:Q9KHV6"/>
<dbReference type="GO" id="GO:0009036">
    <property type="term" value="F:type II site-specific deoxyribonuclease activity"/>
    <property type="evidence" value="ECO:0007669"/>
    <property type="project" value="UniProtKB-EC"/>
</dbReference>
<dbReference type="GO" id="GO:0009307">
    <property type="term" value="P:DNA restriction-modification system"/>
    <property type="evidence" value="ECO:0007669"/>
    <property type="project" value="UniProtKB-KW"/>
</dbReference>
<dbReference type="CDD" id="cd22309">
    <property type="entry name" value="AgeI-like"/>
    <property type="match status" value="1"/>
</dbReference>
<dbReference type="InterPro" id="IPR041551">
    <property type="entry name" value="RE_BsaWI"/>
</dbReference>
<dbReference type="Pfam" id="PF18643">
    <property type="entry name" value="RE_BsaWI"/>
    <property type="match status" value="1"/>
</dbReference>
<protein>
    <recommendedName>
        <fullName evidence="1">Type II restriction enzyme AgeI</fullName>
        <shortName>R.AgeI</shortName>
        <ecNumber>3.1.21.4</ecNumber>
    </recommendedName>
    <alternativeName>
        <fullName>Endonuclease AgeI</fullName>
    </alternativeName>
    <alternativeName>
        <fullName>Type-2 restriction enzyme AgeI</fullName>
    </alternativeName>
</protein>
<keyword id="KW-0002">3D-structure</keyword>
<keyword id="KW-0255">Endonuclease</keyword>
<keyword id="KW-0378">Hydrolase</keyword>
<keyword id="KW-0540">Nuclease</keyword>
<keyword id="KW-0680">Restriction system</keyword>
<comment type="function">
    <text evidence="1">A P subtype restriction enzyme that recognizes the double-stranded sequence 5'-ACCGGT-3' and cleaves after A-1.</text>
</comment>
<comment type="catalytic activity">
    <reaction>
        <text>Endonucleolytic cleavage of DNA to give specific double-stranded fragments with terminal 5'-phosphates.</text>
        <dbReference type="EC" id="3.1.21.4"/>
    </reaction>
</comment>
<comment type="similarity">
    <text evidence="2">Belongs to the BsaWI type II restriction endonuclease family.</text>
</comment>